<feature type="chain" id="PRO_0000240743" description="Argininosuccinate lyase">
    <location>
        <begin position="1"/>
        <end position="467"/>
    </location>
</feature>
<sequence>MSHNNVTHGKPWSGRFHEPTDTFVEEFTASIGFDHRLYRQDIHGSIAHARMLAKVGVLSREECDAIIQGLETIAQDISRGQFSWSVALEDVHMNIEAALTERIGPVGKKLHTGRSRNDQIATDIRLYLRDAIDLITAQLQRLQEGLLAIAEREAATIMPGFTHLQTAQPVTFGHHLMAWFEMLLRDTGRLADCRHRVNVLPLGAAALAGTTFPIDRAYTAELLGFDGIAENSLDAVSDRDFAIEFTAAGALLMTHLSRFAEELVLWSSAQFDFITLPDRFCTGSSIMPQKKNPDVPELVRGKTGRVNGHLVSLLTLMKGQPLAYNKDNQEDKEPLFDTVDTLLGCLRAFADMIPAITTNPDKMREAATKGYATATDLADYLVRKGVSFRDAHEIVGKAVALAIEQSKDLAALKLATLQDFSPVIEEDVFDVLTLEGSVAARNHLGGTAPAQVRAAIQRGREKLNSLA</sequence>
<proteinExistence type="inferred from homology"/>
<reference key="1">
    <citation type="journal article" date="2006" name="Appl. Environ. Microbiol.">
        <title>Complete genome sequence of the marine, chemolithoautotrophic, ammonia-oxidizing bacterium Nitrosococcus oceani ATCC 19707.</title>
        <authorList>
            <person name="Klotz M.G."/>
            <person name="Arp D.J."/>
            <person name="Chain P.S.G."/>
            <person name="El-Sheikh A.F."/>
            <person name="Hauser L.J."/>
            <person name="Hommes N.G."/>
            <person name="Larimer F.W."/>
            <person name="Malfatti S.A."/>
            <person name="Norton J.M."/>
            <person name="Poret-Peterson A.T."/>
            <person name="Vergez L.M."/>
            <person name="Ward B.B."/>
        </authorList>
    </citation>
    <scope>NUCLEOTIDE SEQUENCE [LARGE SCALE GENOMIC DNA]</scope>
    <source>
        <strain>ATCC 19707 / BCRC 17464 / JCM 30415 / NCIMB 11848 / C-107</strain>
    </source>
</reference>
<gene>
    <name evidence="1" type="primary">argH</name>
    <name type="ordered locus">Noc_0501</name>
</gene>
<protein>
    <recommendedName>
        <fullName evidence="1">Argininosuccinate lyase</fullName>
        <shortName evidence="1">ASAL</shortName>
        <ecNumber evidence="1">4.3.2.1</ecNumber>
    </recommendedName>
    <alternativeName>
        <fullName evidence="1">Arginosuccinase</fullName>
    </alternativeName>
</protein>
<accession>Q3JDS2</accession>
<name>ARLY_NITOC</name>
<comment type="catalytic activity">
    <reaction evidence="1">
        <text>2-(N(omega)-L-arginino)succinate = fumarate + L-arginine</text>
        <dbReference type="Rhea" id="RHEA:24020"/>
        <dbReference type="ChEBI" id="CHEBI:29806"/>
        <dbReference type="ChEBI" id="CHEBI:32682"/>
        <dbReference type="ChEBI" id="CHEBI:57472"/>
        <dbReference type="EC" id="4.3.2.1"/>
    </reaction>
</comment>
<comment type="pathway">
    <text evidence="1">Amino-acid biosynthesis; L-arginine biosynthesis; L-arginine from L-ornithine and carbamoyl phosphate: step 3/3.</text>
</comment>
<comment type="subcellular location">
    <subcellularLocation>
        <location evidence="1">Cytoplasm</location>
    </subcellularLocation>
</comment>
<comment type="similarity">
    <text evidence="1">Belongs to the lyase 1 family. Argininosuccinate lyase subfamily.</text>
</comment>
<dbReference type="EC" id="4.3.2.1" evidence="1"/>
<dbReference type="EMBL" id="CP000127">
    <property type="protein sequence ID" value="ABA57024.1"/>
    <property type="molecule type" value="Genomic_DNA"/>
</dbReference>
<dbReference type="RefSeq" id="WP_002814263.1">
    <property type="nucleotide sequence ID" value="NC_007484.1"/>
</dbReference>
<dbReference type="SMR" id="Q3JDS2"/>
<dbReference type="FunCoup" id="Q3JDS2">
    <property type="interactions" value="502"/>
</dbReference>
<dbReference type="STRING" id="323261.Noc_0501"/>
<dbReference type="KEGG" id="noc:Noc_0501"/>
<dbReference type="eggNOG" id="COG0165">
    <property type="taxonomic scope" value="Bacteria"/>
</dbReference>
<dbReference type="HOGENOM" id="CLU_027272_2_3_6"/>
<dbReference type="InParanoid" id="Q3JDS2"/>
<dbReference type="UniPathway" id="UPA00068">
    <property type="reaction ID" value="UER00114"/>
</dbReference>
<dbReference type="Proteomes" id="UP000006838">
    <property type="component" value="Chromosome"/>
</dbReference>
<dbReference type="GO" id="GO:0005829">
    <property type="term" value="C:cytosol"/>
    <property type="evidence" value="ECO:0007669"/>
    <property type="project" value="TreeGrafter"/>
</dbReference>
<dbReference type="GO" id="GO:0004056">
    <property type="term" value="F:argininosuccinate lyase activity"/>
    <property type="evidence" value="ECO:0007669"/>
    <property type="project" value="UniProtKB-UniRule"/>
</dbReference>
<dbReference type="GO" id="GO:0042450">
    <property type="term" value="P:arginine biosynthetic process via ornithine"/>
    <property type="evidence" value="ECO:0007669"/>
    <property type="project" value="InterPro"/>
</dbReference>
<dbReference type="GO" id="GO:0006526">
    <property type="term" value="P:L-arginine biosynthetic process"/>
    <property type="evidence" value="ECO:0007669"/>
    <property type="project" value="UniProtKB-UniRule"/>
</dbReference>
<dbReference type="CDD" id="cd01359">
    <property type="entry name" value="Argininosuccinate_lyase"/>
    <property type="match status" value="1"/>
</dbReference>
<dbReference type="FunFam" id="1.10.275.10:FF:000002">
    <property type="entry name" value="Argininosuccinate lyase"/>
    <property type="match status" value="1"/>
</dbReference>
<dbReference type="FunFam" id="1.10.40.30:FF:000001">
    <property type="entry name" value="Argininosuccinate lyase"/>
    <property type="match status" value="1"/>
</dbReference>
<dbReference type="FunFam" id="1.20.200.10:FF:000015">
    <property type="entry name" value="argininosuccinate lyase isoform X2"/>
    <property type="match status" value="1"/>
</dbReference>
<dbReference type="Gene3D" id="1.10.40.30">
    <property type="entry name" value="Fumarase/aspartase (C-terminal domain)"/>
    <property type="match status" value="1"/>
</dbReference>
<dbReference type="Gene3D" id="1.20.200.10">
    <property type="entry name" value="Fumarase/aspartase (Central domain)"/>
    <property type="match status" value="1"/>
</dbReference>
<dbReference type="Gene3D" id="1.10.275.10">
    <property type="entry name" value="Fumarase/aspartase (N-terminal domain)"/>
    <property type="match status" value="1"/>
</dbReference>
<dbReference type="HAMAP" id="MF_00006">
    <property type="entry name" value="Arg_succ_lyase"/>
    <property type="match status" value="1"/>
</dbReference>
<dbReference type="InterPro" id="IPR029419">
    <property type="entry name" value="Arg_succ_lyase_C"/>
</dbReference>
<dbReference type="InterPro" id="IPR009049">
    <property type="entry name" value="Argininosuccinate_lyase"/>
</dbReference>
<dbReference type="InterPro" id="IPR024083">
    <property type="entry name" value="Fumarase/histidase_N"/>
</dbReference>
<dbReference type="InterPro" id="IPR020557">
    <property type="entry name" value="Fumarate_lyase_CS"/>
</dbReference>
<dbReference type="InterPro" id="IPR000362">
    <property type="entry name" value="Fumarate_lyase_fam"/>
</dbReference>
<dbReference type="InterPro" id="IPR022761">
    <property type="entry name" value="Fumarate_lyase_N"/>
</dbReference>
<dbReference type="InterPro" id="IPR008948">
    <property type="entry name" value="L-Aspartase-like"/>
</dbReference>
<dbReference type="NCBIfam" id="TIGR00838">
    <property type="entry name" value="argH"/>
    <property type="match status" value="1"/>
</dbReference>
<dbReference type="PANTHER" id="PTHR43814">
    <property type="entry name" value="ARGININOSUCCINATE LYASE"/>
    <property type="match status" value="1"/>
</dbReference>
<dbReference type="PANTHER" id="PTHR43814:SF1">
    <property type="entry name" value="ARGININOSUCCINATE LYASE"/>
    <property type="match status" value="1"/>
</dbReference>
<dbReference type="Pfam" id="PF14698">
    <property type="entry name" value="ASL_C2"/>
    <property type="match status" value="1"/>
</dbReference>
<dbReference type="Pfam" id="PF00206">
    <property type="entry name" value="Lyase_1"/>
    <property type="match status" value="1"/>
</dbReference>
<dbReference type="PRINTS" id="PR00145">
    <property type="entry name" value="ARGSUCLYASE"/>
</dbReference>
<dbReference type="PRINTS" id="PR00149">
    <property type="entry name" value="FUMRATELYASE"/>
</dbReference>
<dbReference type="SUPFAM" id="SSF48557">
    <property type="entry name" value="L-aspartase-like"/>
    <property type="match status" value="1"/>
</dbReference>
<dbReference type="PROSITE" id="PS00163">
    <property type="entry name" value="FUMARATE_LYASES"/>
    <property type="match status" value="1"/>
</dbReference>
<organism>
    <name type="scientific">Nitrosococcus oceani (strain ATCC 19707 / BCRC 17464 / JCM 30415 / NCIMB 11848 / C-107)</name>
    <dbReference type="NCBI Taxonomy" id="323261"/>
    <lineage>
        <taxon>Bacteria</taxon>
        <taxon>Pseudomonadati</taxon>
        <taxon>Pseudomonadota</taxon>
        <taxon>Gammaproteobacteria</taxon>
        <taxon>Chromatiales</taxon>
        <taxon>Chromatiaceae</taxon>
        <taxon>Nitrosococcus</taxon>
    </lineage>
</organism>
<keyword id="KW-0028">Amino-acid biosynthesis</keyword>
<keyword id="KW-0055">Arginine biosynthesis</keyword>
<keyword id="KW-0963">Cytoplasm</keyword>
<keyword id="KW-0456">Lyase</keyword>
<keyword id="KW-1185">Reference proteome</keyword>
<evidence type="ECO:0000255" key="1">
    <source>
        <dbReference type="HAMAP-Rule" id="MF_00006"/>
    </source>
</evidence>